<accession>A6U0V7</accession>
<name>RNH3_STAA2</name>
<gene>
    <name evidence="1" type="primary">rnhC</name>
    <name type="ordered locus">SaurJH1_1221</name>
</gene>
<feature type="chain" id="PRO_1000074941" description="Ribonuclease HIII">
    <location>
        <begin position="1"/>
        <end position="312"/>
    </location>
</feature>
<feature type="domain" description="RNase H type-2" evidence="2">
    <location>
        <begin position="95"/>
        <end position="311"/>
    </location>
</feature>
<feature type="binding site" evidence="1">
    <location>
        <position position="101"/>
    </location>
    <ligand>
        <name>a divalent metal cation</name>
        <dbReference type="ChEBI" id="CHEBI:60240"/>
    </ligand>
</feature>
<feature type="binding site" evidence="1">
    <location>
        <position position="102"/>
    </location>
    <ligand>
        <name>a divalent metal cation</name>
        <dbReference type="ChEBI" id="CHEBI:60240"/>
    </ligand>
</feature>
<feature type="binding site" evidence="1">
    <location>
        <position position="206"/>
    </location>
    <ligand>
        <name>a divalent metal cation</name>
        <dbReference type="ChEBI" id="CHEBI:60240"/>
    </ligand>
</feature>
<protein>
    <recommendedName>
        <fullName evidence="1">Ribonuclease HIII</fullName>
        <shortName evidence="1">RNase HIII</shortName>
        <ecNumber evidence="1">3.1.26.4</ecNumber>
    </recommendedName>
</protein>
<organism>
    <name type="scientific">Staphylococcus aureus (strain JH1)</name>
    <dbReference type="NCBI Taxonomy" id="359787"/>
    <lineage>
        <taxon>Bacteria</taxon>
        <taxon>Bacillati</taxon>
        <taxon>Bacillota</taxon>
        <taxon>Bacilli</taxon>
        <taxon>Bacillales</taxon>
        <taxon>Staphylococcaceae</taxon>
        <taxon>Staphylococcus</taxon>
    </lineage>
</organism>
<evidence type="ECO:0000255" key="1">
    <source>
        <dbReference type="HAMAP-Rule" id="MF_00053"/>
    </source>
</evidence>
<evidence type="ECO:0000255" key="2">
    <source>
        <dbReference type="PROSITE-ProRule" id="PRU01319"/>
    </source>
</evidence>
<keyword id="KW-0963">Cytoplasm</keyword>
<keyword id="KW-0255">Endonuclease</keyword>
<keyword id="KW-0378">Hydrolase</keyword>
<keyword id="KW-0460">Magnesium</keyword>
<keyword id="KW-0479">Metal-binding</keyword>
<keyword id="KW-0540">Nuclease</keyword>
<sequence length="312" mass="35055">MANIVFKLSDKDITTLMSRITFDTENLPQGMKARAKYQNTTVNIYQSGKVMFQGNHAEAVSKELLPQHSQLNTNKTKKKNMANSSLEQTLMYDQFNCIGSDEAGSGDYFGPLTVCAAFVTKEHVPILKTLGVDDSKKLTDTKIVELAEQLVAFIPHSLLTLHNDKYNIQQAKGWTQVKMKAVLHNEAIKNVLEKIDSSQLDYIVIDQFAKREVYSHYALSDIPLPKKTKFETKGESKSLAIAVASIISRYAFITYMDQISKYINMTIPKGAGAKVDVIAAKIIKKYGLSRLDTISKKHFKNREKAQKILKPL</sequence>
<reference key="1">
    <citation type="submission" date="2007-06" db="EMBL/GenBank/DDBJ databases">
        <title>Complete sequence of chromosome of Staphylococcus aureus subsp. aureus JH1.</title>
        <authorList>
            <consortium name="US DOE Joint Genome Institute"/>
            <person name="Copeland A."/>
            <person name="Lucas S."/>
            <person name="Lapidus A."/>
            <person name="Barry K."/>
            <person name="Detter J.C."/>
            <person name="Glavina del Rio T."/>
            <person name="Hammon N."/>
            <person name="Israni S."/>
            <person name="Dalin E."/>
            <person name="Tice H."/>
            <person name="Pitluck S."/>
            <person name="Chain P."/>
            <person name="Malfatti S."/>
            <person name="Shin M."/>
            <person name="Vergez L."/>
            <person name="Schmutz J."/>
            <person name="Larimer F."/>
            <person name="Land M."/>
            <person name="Hauser L."/>
            <person name="Kyrpides N."/>
            <person name="Ivanova N."/>
            <person name="Tomasz A."/>
            <person name="Richardson P."/>
        </authorList>
    </citation>
    <scope>NUCLEOTIDE SEQUENCE [LARGE SCALE GENOMIC DNA]</scope>
    <source>
        <strain>JH1</strain>
    </source>
</reference>
<proteinExistence type="inferred from homology"/>
<comment type="function">
    <text evidence="1">Endonuclease that specifically degrades the RNA of RNA-DNA hybrids.</text>
</comment>
<comment type="catalytic activity">
    <reaction evidence="1">
        <text>Endonucleolytic cleavage to 5'-phosphomonoester.</text>
        <dbReference type="EC" id="3.1.26.4"/>
    </reaction>
</comment>
<comment type="cofactor">
    <cofactor evidence="1">
        <name>Mn(2+)</name>
        <dbReference type="ChEBI" id="CHEBI:29035"/>
    </cofactor>
    <cofactor evidence="1">
        <name>Mg(2+)</name>
        <dbReference type="ChEBI" id="CHEBI:18420"/>
    </cofactor>
    <text evidence="1">Manganese or magnesium. Binds 1 divalent metal ion per monomer in the absence of substrate. May bind a second metal ion after substrate binding.</text>
</comment>
<comment type="subcellular location">
    <subcellularLocation>
        <location evidence="1">Cytoplasm</location>
    </subcellularLocation>
</comment>
<comment type="similarity">
    <text evidence="1">Belongs to the RNase HII family. RnhC subfamily.</text>
</comment>
<dbReference type="EC" id="3.1.26.4" evidence="1"/>
<dbReference type="EMBL" id="CP000736">
    <property type="protein sequence ID" value="ABR52075.1"/>
    <property type="molecule type" value="Genomic_DNA"/>
</dbReference>
<dbReference type="SMR" id="A6U0V7"/>
<dbReference type="KEGG" id="sah:SaurJH1_1221"/>
<dbReference type="HOGENOM" id="CLU_059546_1_0_9"/>
<dbReference type="GO" id="GO:0005737">
    <property type="term" value="C:cytoplasm"/>
    <property type="evidence" value="ECO:0007669"/>
    <property type="project" value="UniProtKB-SubCell"/>
</dbReference>
<dbReference type="GO" id="GO:0032299">
    <property type="term" value="C:ribonuclease H2 complex"/>
    <property type="evidence" value="ECO:0007669"/>
    <property type="project" value="TreeGrafter"/>
</dbReference>
<dbReference type="GO" id="GO:0000287">
    <property type="term" value="F:magnesium ion binding"/>
    <property type="evidence" value="ECO:0007669"/>
    <property type="project" value="UniProtKB-UniRule"/>
</dbReference>
<dbReference type="GO" id="GO:0003723">
    <property type="term" value="F:RNA binding"/>
    <property type="evidence" value="ECO:0007669"/>
    <property type="project" value="InterPro"/>
</dbReference>
<dbReference type="GO" id="GO:0004523">
    <property type="term" value="F:RNA-DNA hybrid ribonuclease activity"/>
    <property type="evidence" value="ECO:0007669"/>
    <property type="project" value="UniProtKB-UniRule"/>
</dbReference>
<dbReference type="GO" id="GO:0043137">
    <property type="term" value="P:DNA replication, removal of RNA primer"/>
    <property type="evidence" value="ECO:0007669"/>
    <property type="project" value="TreeGrafter"/>
</dbReference>
<dbReference type="GO" id="GO:0006298">
    <property type="term" value="P:mismatch repair"/>
    <property type="evidence" value="ECO:0007669"/>
    <property type="project" value="TreeGrafter"/>
</dbReference>
<dbReference type="CDD" id="cd06590">
    <property type="entry name" value="RNase_HII_bacteria_HIII_like"/>
    <property type="match status" value="1"/>
</dbReference>
<dbReference type="CDD" id="cd14796">
    <property type="entry name" value="RNAse_HIII_N"/>
    <property type="match status" value="1"/>
</dbReference>
<dbReference type="FunFam" id="3.30.420.10:FF:000047">
    <property type="entry name" value="Ribonuclease HIII"/>
    <property type="match status" value="1"/>
</dbReference>
<dbReference type="Gene3D" id="3.30.420.10">
    <property type="entry name" value="Ribonuclease H-like superfamily/Ribonuclease H"/>
    <property type="match status" value="1"/>
</dbReference>
<dbReference type="Gene3D" id="3.30.310.10">
    <property type="entry name" value="TATA-Binding Protein"/>
    <property type="match status" value="1"/>
</dbReference>
<dbReference type="HAMAP" id="MF_00053">
    <property type="entry name" value="RNase_HIII"/>
    <property type="match status" value="1"/>
</dbReference>
<dbReference type="InterPro" id="IPR001352">
    <property type="entry name" value="RNase_HII/HIII"/>
</dbReference>
<dbReference type="InterPro" id="IPR024567">
    <property type="entry name" value="RNase_HII/HIII_dom"/>
</dbReference>
<dbReference type="InterPro" id="IPR004641">
    <property type="entry name" value="RNase_HIII"/>
</dbReference>
<dbReference type="InterPro" id="IPR024568">
    <property type="entry name" value="RNase_HIII_N"/>
</dbReference>
<dbReference type="InterPro" id="IPR012337">
    <property type="entry name" value="RNaseH-like_sf"/>
</dbReference>
<dbReference type="InterPro" id="IPR036397">
    <property type="entry name" value="RNaseH_sf"/>
</dbReference>
<dbReference type="InterPro" id="IPR012295">
    <property type="entry name" value="TBP_dom_sf"/>
</dbReference>
<dbReference type="NCBIfam" id="TIGR00716">
    <property type="entry name" value="rnhC"/>
    <property type="match status" value="1"/>
</dbReference>
<dbReference type="PANTHER" id="PTHR10954:SF23">
    <property type="entry name" value="RIBONUCLEASE"/>
    <property type="match status" value="1"/>
</dbReference>
<dbReference type="PANTHER" id="PTHR10954">
    <property type="entry name" value="RIBONUCLEASE H2 SUBUNIT A"/>
    <property type="match status" value="1"/>
</dbReference>
<dbReference type="Pfam" id="PF11858">
    <property type="entry name" value="DUF3378"/>
    <property type="match status" value="1"/>
</dbReference>
<dbReference type="Pfam" id="PF01351">
    <property type="entry name" value="RNase_HII"/>
    <property type="match status" value="1"/>
</dbReference>
<dbReference type="PIRSF" id="PIRSF037748">
    <property type="entry name" value="RnhC"/>
    <property type="match status" value="1"/>
</dbReference>
<dbReference type="SUPFAM" id="SSF53098">
    <property type="entry name" value="Ribonuclease H-like"/>
    <property type="match status" value="1"/>
</dbReference>
<dbReference type="PROSITE" id="PS51975">
    <property type="entry name" value="RNASE_H_2"/>
    <property type="match status" value="1"/>
</dbReference>